<comment type="function">
    <text evidence="3">Isomerization of 3-trans,5-cis-dienoyl-CoA to 2-trans,4-trans-dienoyl-CoA.</text>
</comment>
<comment type="catalytic activity">
    <reaction evidence="3">
        <text>(3E,5Z)-octadienoyl-CoA = (2E,4E)-octadienoyl-CoA</text>
        <dbReference type="Rhea" id="RHEA:45244"/>
        <dbReference type="ChEBI" id="CHEBI:62243"/>
        <dbReference type="ChEBI" id="CHEBI:85108"/>
    </reaction>
</comment>
<comment type="catalytic activity">
    <reaction evidence="3">
        <text>(3E,5Z,8Z,11Z,14Z)-eicosapentaenoyl-CoA = (2E,4E,8Z,11Z,14Z)-eicosapentaenoyl-CoA</text>
        <dbReference type="Rhea" id="RHEA:45224"/>
        <dbReference type="ChEBI" id="CHEBI:85090"/>
        <dbReference type="ChEBI" id="CHEBI:85091"/>
    </reaction>
</comment>
<comment type="pathway">
    <text evidence="3">Lipid metabolism; fatty acid beta-oxidation.</text>
</comment>
<comment type="subunit">
    <text evidence="3">Homohexamer.</text>
</comment>
<comment type="subcellular location">
    <subcellularLocation>
        <location evidence="3">Mitochondrion</location>
    </subcellularLocation>
    <subcellularLocation>
        <location evidence="3">Peroxisome</location>
    </subcellularLocation>
</comment>
<comment type="similarity">
    <text evidence="5">Belongs to the enoyl-CoA hydratase/isomerase family.</text>
</comment>
<evidence type="ECO:0000250" key="1">
    <source>
        <dbReference type="UniProtKB" id="P42126"/>
    </source>
</evidence>
<evidence type="ECO:0000250" key="2">
    <source>
        <dbReference type="UniProtKB" id="Q13011"/>
    </source>
</evidence>
<evidence type="ECO:0000250" key="3">
    <source>
        <dbReference type="UniProtKB" id="Q62651"/>
    </source>
</evidence>
<evidence type="ECO:0000255" key="4"/>
<evidence type="ECO:0000305" key="5"/>
<evidence type="ECO:0000312" key="6">
    <source>
        <dbReference type="MGI" id="MGI:1858208"/>
    </source>
</evidence>
<evidence type="ECO:0007744" key="7">
    <source>
    </source>
</evidence>
<evidence type="ECO:0007744" key="8">
    <source>
    </source>
</evidence>
<sequence length="327" mass="36118">MATAMTVSSKLRGLLMQQLRGTSQLYFNISLRSLSSSAQEASKRAPEEVSDHNYESIQVTSAQKHVLHVQLNRPEKRNAMNRAFWRELVECFQKISKDSDCRAVVVSGAGKMFTSGIDLMDMASELMQPSGDDAARIAWYLRDLISKYQKTFTVIEKCPKPVIAAIHGGCIGGGVDLVSACDIRYCTQDAFFQIKEVDMGLAADVGTLQRLPKVIGNQSLVNELTFSARKMMADEALDSGLVSRVFQDKDAMLNAAFALAADISSKSPVAVQGSKINLIYSRDHSVDESLDYMATWNMSMLQTQDIIKSVQAAMEKRDTKSITFSKL</sequence>
<organism>
    <name type="scientific">Mus musculus</name>
    <name type="common">Mouse</name>
    <dbReference type="NCBI Taxonomy" id="10090"/>
    <lineage>
        <taxon>Eukaryota</taxon>
        <taxon>Metazoa</taxon>
        <taxon>Chordata</taxon>
        <taxon>Craniata</taxon>
        <taxon>Vertebrata</taxon>
        <taxon>Euteleostomi</taxon>
        <taxon>Mammalia</taxon>
        <taxon>Eutheria</taxon>
        <taxon>Euarchontoglires</taxon>
        <taxon>Glires</taxon>
        <taxon>Rodentia</taxon>
        <taxon>Myomorpha</taxon>
        <taxon>Muroidea</taxon>
        <taxon>Muridae</taxon>
        <taxon>Murinae</taxon>
        <taxon>Mus</taxon>
        <taxon>Mus</taxon>
    </lineage>
</organism>
<protein>
    <recommendedName>
        <fullName evidence="5">Delta(3,5)-Delta(2,4)-dienoyl-CoA isomerase, mitochondrial</fullName>
        <ecNumber evidence="3">5.3.3.-</ecNumber>
    </recommendedName>
</protein>
<proteinExistence type="evidence at protein level"/>
<accession>O35459</accession>
<accession>Q5M8P6</accession>
<keyword id="KW-0007">Acetylation</keyword>
<keyword id="KW-0276">Fatty acid metabolism</keyword>
<keyword id="KW-0413">Isomerase</keyword>
<keyword id="KW-0443">Lipid metabolism</keyword>
<keyword id="KW-0496">Mitochondrion</keyword>
<keyword id="KW-0576">Peroxisome</keyword>
<keyword id="KW-0597">Phosphoprotein</keyword>
<keyword id="KW-1185">Reference proteome</keyword>
<keyword id="KW-0809">Transit peptide</keyword>
<feature type="transit peptide" description="Mitochondrion" evidence="4">
    <location>
        <begin position="1"/>
        <end position="33"/>
    </location>
</feature>
<feature type="chain" id="PRO_0000007418" description="Delta(3,5)-Delta(2,4)-dienoyl-CoA isomerase, mitochondrial">
    <location>
        <begin position="34"/>
        <end position="327"/>
    </location>
</feature>
<feature type="short sequence motif" description="Microbody targeting signal" evidence="4">
    <location>
        <begin position="325"/>
        <end position="327"/>
    </location>
</feature>
<feature type="binding site" evidence="1">
    <location>
        <begin position="115"/>
        <end position="119"/>
    </location>
    <ligand>
        <name>substrate</name>
    </ligand>
</feature>
<feature type="binding site" evidence="1">
    <location>
        <position position="173"/>
    </location>
    <ligand>
        <name>substrate</name>
    </ligand>
</feature>
<feature type="site" description="Important for catalytic activity" evidence="1">
    <location>
        <position position="196"/>
    </location>
</feature>
<feature type="site" description="Important for catalytic activity" evidence="3">
    <location>
        <position position="204"/>
    </location>
</feature>
<feature type="modified residue" description="N6-acetyllysine" evidence="7">
    <location>
        <position position="147"/>
    </location>
</feature>
<feature type="modified residue" description="N6-succinyllysine" evidence="8">
    <location>
        <position position="230"/>
    </location>
</feature>
<feature type="modified residue" description="Phosphoserine" evidence="2">
    <location>
        <position position="267"/>
    </location>
</feature>
<feature type="modified residue" description="N6-succinyllysine" evidence="8">
    <location>
        <position position="316"/>
    </location>
</feature>
<feature type="modified residue" description="N6-acetyllysine" evidence="2">
    <location>
        <position position="326"/>
    </location>
</feature>
<name>ECH1_MOUSE</name>
<reference key="1">
    <citation type="submission" date="1997-11" db="EMBL/GenBank/DDBJ databases">
        <title>Identification and characterisation of mouse ECH1.</title>
        <authorList>
            <person name="Fitzpatrick D.R."/>
        </authorList>
    </citation>
    <scope>NUCLEOTIDE SEQUENCE [MRNA]</scope>
</reference>
<reference key="2">
    <citation type="journal article" date="2004" name="Genome Res.">
        <title>The status, quality, and expansion of the NIH full-length cDNA project: the Mammalian Gene Collection (MGC).</title>
        <authorList>
            <consortium name="The MGC Project Team"/>
        </authorList>
    </citation>
    <scope>NUCLEOTIDE SEQUENCE [LARGE SCALE MRNA]</scope>
    <source>
        <strain>C57BL/6J</strain>
        <tissue>Brain</tissue>
        <tissue>Testis</tissue>
    </source>
</reference>
<reference key="3">
    <citation type="journal article" date="2010" name="Cell">
        <title>A tissue-specific atlas of mouse protein phosphorylation and expression.</title>
        <authorList>
            <person name="Huttlin E.L."/>
            <person name="Jedrychowski M.P."/>
            <person name="Elias J.E."/>
            <person name="Goswami T."/>
            <person name="Rad R."/>
            <person name="Beausoleil S.A."/>
            <person name="Villen J."/>
            <person name="Haas W."/>
            <person name="Sowa M.E."/>
            <person name="Gygi S.P."/>
        </authorList>
    </citation>
    <scope>IDENTIFICATION BY MASS SPECTROMETRY [LARGE SCALE ANALYSIS]</scope>
    <source>
        <tissue>Brain</tissue>
        <tissue>Brown adipose tissue</tissue>
        <tissue>Heart</tissue>
        <tissue>Kidney</tissue>
        <tissue>Liver</tissue>
        <tissue>Lung</tissue>
        <tissue>Pancreas</tissue>
        <tissue>Spleen</tissue>
        <tissue>Testis</tissue>
    </source>
</reference>
<reference key="4">
    <citation type="journal article" date="2013" name="Mol. Cell">
        <title>SIRT5-mediated lysine desuccinylation impacts diverse metabolic pathways.</title>
        <authorList>
            <person name="Park J."/>
            <person name="Chen Y."/>
            <person name="Tishkoff D.X."/>
            <person name="Peng C."/>
            <person name="Tan M."/>
            <person name="Dai L."/>
            <person name="Xie Z."/>
            <person name="Zhang Y."/>
            <person name="Zwaans B.M."/>
            <person name="Skinner M.E."/>
            <person name="Lombard D.B."/>
            <person name="Zhao Y."/>
        </authorList>
    </citation>
    <scope>SUCCINYLATION [LARGE SCALE ANALYSIS] AT LYS-230 AND LYS-316</scope>
    <scope>IDENTIFICATION BY MASS SPECTROMETRY [LARGE SCALE ANALYSIS]</scope>
    <source>
        <tissue>Liver</tissue>
    </source>
</reference>
<reference key="5">
    <citation type="journal article" date="2013" name="Proc. Natl. Acad. Sci. U.S.A.">
        <title>Label-free quantitative proteomics of the lysine acetylome in mitochondria identifies substrates of SIRT3 in metabolic pathways.</title>
        <authorList>
            <person name="Rardin M.J."/>
            <person name="Newman J.C."/>
            <person name="Held J.M."/>
            <person name="Cusack M.P."/>
            <person name="Sorensen D.J."/>
            <person name="Li B."/>
            <person name="Schilling B."/>
            <person name="Mooney S.D."/>
            <person name="Kahn C.R."/>
            <person name="Verdin E."/>
            <person name="Gibson B.W."/>
        </authorList>
    </citation>
    <scope>ACETYLATION [LARGE SCALE ANALYSIS] AT LYS-147</scope>
    <scope>IDENTIFICATION BY MASS SPECTROMETRY [LARGE SCALE ANALYSIS]</scope>
    <source>
        <tissue>Liver</tissue>
    </source>
</reference>
<dbReference type="EC" id="5.3.3.-" evidence="3"/>
<dbReference type="EMBL" id="AF030343">
    <property type="protein sequence ID" value="AAB84224.1"/>
    <property type="molecule type" value="mRNA"/>
</dbReference>
<dbReference type="EMBL" id="BC068112">
    <property type="protein sequence ID" value="AAH68112.1"/>
    <property type="molecule type" value="mRNA"/>
</dbReference>
<dbReference type="EMBL" id="BC087924">
    <property type="protein sequence ID" value="AAH87924.1"/>
    <property type="molecule type" value="mRNA"/>
</dbReference>
<dbReference type="CCDS" id="CCDS21057.1"/>
<dbReference type="RefSeq" id="NP_058052.1">
    <property type="nucleotide sequence ID" value="NM_016772.1"/>
</dbReference>
<dbReference type="SMR" id="O35459"/>
<dbReference type="BioGRID" id="206181">
    <property type="interactions" value="41"/>
</dbReference>
<dbReference type="FunCoup" id="O35459">
    <property type="interactions" value="2160"/>
</dbReference>
<dbReference type="IntAct" id="O35459">
    <property type="interactions" value="3"/>
</dbReference>
<dbReference type="MINT" id="O35459"/>
<dbReference type="STRING" id="10090.ENSMUSP00000066092"/>
<dbReference type="GlyGen" id="O35459">
    <property type="glycosylation" value="1 site, 1 O-linked glycan (1 site)"/>
</dbReference>
<dbReference type="iPTMnet" id="O35459"/>
<dbReference type="PhosphoSitePlus" id="O35459"/>
<dbReference type="SwissPalm" id="O35459"/>
<dbReference type="REPRODUCTION-2DPAGE" id="O35459"/>
<dbReference type="jPOST" id="O35459"/>
<dbReference type="PaxDb" id="10090-ENSMUSP00000066092"/>
<dbReference type="PeptideAtlas" id="O35459"/>
<dbReference type="ProteomicsDB" id="275430"/>
<dbReference type="Pumba" id="O35459"/>
<dbReference type="Antibodypedia" id="1042">
    <property type="antibodies" value="277 antibodies from 30 providers"/>
</dbReference>
<dbReference type="DNASU" id="51798"/>
<dbReference type="Ensembl" id="ENSMUST00000066264.13">
    <property type="protein sequence ID" value="ENSMUSP00000066092.7"/>
    <property type="gene ID" value="ENSMUSG00000053898.13"/>
</dbReference>
<dbReference type="GeneID" id="51798"/>
<dbReference type="KEGG" id="mmu:51798"/>
<dbReference type="UCSC" id="uc009gab.1">
    <property type="organism name" value="mouse"/>
</dbReference>
<dbReference type="AGR" id="MGI:1858208"/>
<dbReference type="CTD" id="1891"/>
<dbReference type="MGI" id="MGI:1858208">
    <property type="gene designation" value="Ech1"/>
</dbReference>
<dbReference type="VEuPathDB" id="HostDB:ENSMUSG00000053898"/>
<dbReference type="eggNOG" id="KOG1681">
    <property type="taxonomic scope" value="Eukaryota"/>
</dbReference>
<dbReference type="GeneTree" id="ENSGT00940000159610"/>
<dbReference type="InParanoid" id="O35459"/>
<dbReference type="OMA" id="QYVAHVE"/>
<dbReference type="OrthoDB" id="14970at2759"/>
<dbReference type="PhylomeDB" id="O35459"/>
<dbReference type="TreeFam" id="TF314317"/>
<dbReference type="Reactome" id="R-MMU-9033241">
    <property type="pathway name" value="Peroxisomal protein import"/>
</dbReference>
<dbReference type="Reactome" id="R-MMU-9837999">
    <property type="pathway name" value="Mitochondrial protein degradation"/>
</dbReference>
<dbReference type="UniPathway" id="UPA00659"/>
<dbReference type="BioGRID-ORCS" id="51798">
    <property type="hits" value="2 hits in 79 CRISPR screens"/>
</dbReference>
<dbReference type="ChiTaRS" id="Ech1">
    <property type="organism name" value="mouse"/>
</dbReference>
<dbReference type="PRO" id="PR:O35459"/>
<dbReference type="Proteomes" id="UP000000589">
    <property type="component" value="Chromosome 7"/>
</dbReference>
<dbReference type="RNAct" id="O35459">
    <property type="molecule type" value="protein"/>
</dbReference>
<dbReference type="Bgee" id="ENSMUSG00000053898">
    <property type="expression patterns" value="Expressed in heart right ventricle and 261 other cell types or tissues"/>
</dbReference>
<dbReference type="ExpressionAtlas" id="O35459">
    <property type="expression patterns" value="baseline and differential"/>
</dbReference>
<dbReference type="GO" id="GO:0005739">
    <property type="term" value="C:mitochondrion"/>
    <property type="evidence" value="ECO:0007005"/>
    <property type="project" value="MGI"/>
</dbReference>
<dbReference type="GO" id="GO:0005777">
    <property type="term" value="C:peroxisome"/>
    <property type="evidence" value="ECO:0007669"/>
    <property type="project" value="UniProtKB-SubCell"/>
</dbReference>
<dbReference type="GO" id="GO:0016853">
    <property type="term" value="F:isomerase activity"/>
    <property type="evidence" value="ECO:0007669"/>
    <property type="project" value="UniProtKB-KW"/>
</dbReference>
<dbReference type="GO" id="GO:0006635">
    <property type="term" value="P:fatty acid beta-oxidation"/>
    <property type="evidence" value="ECO:0007669"/>
    <property type="project" value="UniProtKB-UniPathway"/>
</dbReference>
<dbReference type="CDD" id="cd06558">
    <property type="entry name" value="crotonase-like"/>
    <property type="match status" value="1"/>
</dbReference>
<dbReference type="FunFam" id="1.10.12.10:FF:000004">
    <property type="entry name" value="Delta3,5-delta2,4-dienoyl-CoA isomerase"/>
    <property type="match status" value="1"/>
</dbReference>
<dbReference type="FunFam" id="3.90.226.10:FF:000024">
    <property type="entry name" value="Delta3,5-delta2,4-dienoyl-CoA isomerase"/>
    <property type="match status" value="1"/>
</dbReference>
<dbReference type="Gene3D" id="3.90.226.10">
    <property type="entry name" value="2-enoyl-CoA Hydratase, Chain A, domain 1"/>
    <property type="match status" value="1"/>
</dbReference>
<dbReference type="Gene3D" id="1.10.12.10">
    <property type="entry name" value="Lyase 2-enoyl-coa Hydratase, Chain A, domain 2"/>
    <property type="match status" value="1"/>
</dbReference>
<dbReference type="InterPro" id="IPR029045">
    <property type="entry name" value="ClpP/crotonase-like_dom_sf"/>
</dbReference>
<dbReference type="InterPro" id="IPR045002">
    <property type="entry name" value="Ech1-like"/>
</dbReference>
<dbReference type="InterPro" id="IPR018376">
    <property type="entry name" value="Enoyl-CoA_hyd/isom_CS"/>
</dbReference>
<dbReference type="InterPro" id="IPR001753">
    <property type="entry name" value="Enoyl-CoA_hydra/iso"/>
</dbReference>
<dbReference type="InterPro" id="IPR014748">
    <property type="entry name" value="Enoyl-CoA_hydra_C"/>
</dbReference>
<dbReference type="NCBIfam" id="NF004794">
    <property type="entry name" value="PRK06142.1"/>
    <property type="match status" value="1"/>
</dbReference>
<dbReference type="PANTHER" id="PTHR43149:SF1">
    <property type="entry name" value="DELTA(3,5)-DELTA(2,4)-DIENOYL-COA ISOMERASE, MITOCHONDRIAL"/>
    <property type="match status" value="1"/>
</dbReference>
<dbReference type="PANTHER" id="PTHR43149">
    <property type="entry name" value="ENOYL-COA HYDRATASE"/>
    <property type="match status" value="1"/>
</dbReference>
<dbReference type="Pfam" id="PF00378">
    <property type="entry name" value="ECH_1"/>
    <property type="match status" value="1"/>
</dbReference>
<dbReference type="SUPFAM" id="SSF52096">
    <property type="entry name" value="ClpP/crotonase"/>
    <property type="match status" value="1"/>
</dbReference>
<dbReference type="PROSITE" id="PS00166">
    <property type="entry name" value="ENOYL_COA_HYDRATASE"/>
    <property type="match status" value="1"/>
</dbReference>
<gene>
    <name evidence="6" type="primary">Ech1</name>
</gene>